<dbReference type="EC" id="6.1.1.10" evidence="1"/>
<dbReference type="EMBL" id="CP000453">
    <property type="protein sequence ID" value="ABI56171.1"/>
    <property type="molecule type" value="Genomic_DNA"/>
</dbReference>
<dbReference type="RefSeq" id="WP_011628566.1">
    <property type="nucleotide sequence ID" value="NC_008340.1"/>
</dbReference>
<dbReference type="SMR" id="Q0AAG6"/>
<dbReference type="KEGG" id="aeh:Mlg_0817"/>
<dbReference type="eggNOG" id="COG0073">
    <property type="taxonomic scope" value="Bacteria"/>
</dbReference>
<dbReference type="eggNOG" id="COG0143">
    <property type="taxonomic scope" value="Bacteria"/>
</dbReference>
<dbReference type="HOGENOM" id="CLU_009710_7_0_6"/>
<dbReference type="OrthoDB" id="9810191at2"/>
<dbReference type="Proteomes" id="UP000001962">
    <property type="component" value="Chromosome"/>
</dbReference>
<dbReference type="GO" id="GO:0005829">
    <property type="term" value="C:cytosol"/>
    <property type="evidence" value="ECO:0007669"/>
    <property type="project" value="TreeGrafter"/>
</dbReference>
<dbReference type="GO" id="GO:0005524">
    <property type="term" value="F:ATP binding"/>
    <property type="evidence" value="ECO:0007669"/>
    <property type="project" value="UniProtKB-UniRule"/>
</dbReference>
<dbReference type="GO" id="GO:0046872">
    <property type="term" value="F:metal ion binding"/>
    <property type="evidence" value="ECO:0007669"/>
    <property type="project" value="UniProtKB-KW"/>
</dbReference>
<dbReference type="GO" id="GO:0004825">
    <property type="term" value="F:methionine-tRNA ligase activity"/>
    <property type="evidence" value="ECO:0007669"/>
    <property type="project" value="UniProtKB-UniRule"/>
</dbReference>
<dbReference type="GO" id="GO:0000049">
    <property type="term" value="F:tRNA binding"/>
    <property type="evidence" value="ECO:0007669"/>
    <property type="project" value="UniProtKB-KW"/>
</dbReference>
<dbReference type="GO" id="GO:0006431">
    <property type="term" value="P:methionyl-tRNA aminoacylation"/>
    <property type="evidence" value="ECO:0007669"/>
    <property type="project" value="UniProtKB-UniRule"/>
</dbReference>
<dbReference type="CDD" id="cd07957">
    <property type="entry name" value="Anticodon_Ia_Met"/>
    <property type="match status" value="1"/>
</dbReference>
<dbReference type="CDD" id="cd00814">
    <property type="entry name" value="MetRS_core"/>
    <property type="match status" value="1"/>
</dbReference>
<dbReference type="CDD" id="cd02800">
    <property type="entry name" value="tRNA_bind_EcMetRS_like"/>
    <property type="match status" value="1"/>
</dbReference>
<dbReference type="FunFam" id="1.10.730.10:FF:000005">
    <property type="entry name" value="Methionine--tRNA ligase"/>
    <property type="match status" value="1"/>
</dbReference>
<dbReference type="FunFam" id="2.20.28.20:FF:000001">
    <property type="entry name" value="Methionine--tRNA ligase"/>
    <property type="match status" value="1"/>
</dbReference>
<dbReference type="FunFam" id="2.40.50.140:FF:000042">
    <property type="entry name" value="Methionine--tRNA ligase"/>
    <property type="match status" value="1"/>
</dbReference>
<dbReference type="Gene3D" id="3.40.50.620">
    <property type="entry name" value="HUPs"/>
    <property type="match status" value="1"/>
</dbReference>
<dbReference type="Gene3D" id="1.10.730.10">
    <property type="entry name" value="Isoleucyl-tRNA Synthetase, Domain 1"/>
    <property type="match status" value="1"/>
</dbReference>
<dbReference type="Gene3D" id="2.20.28.20">
    <property type="entry name" value="Methionyl-tRNA synthetase, Zn-domain"/>
    <property type="match status" value="1"/>
</dbReference>
<dbReference type="Gene3D" id="2.40.50.140">
    <property type="entry name" value="Nucleic acid-binding proteins"/>
    <property type="match status" value="1"/>
</dbReference>
<dbReference type="HAMAP" id="MF_00098">
    <property type="entry name" value="Met_tRNA_synth_type1"/>
    <property type="match status" value="1"/>
</dbReference>
<dbReference type="InterPro" id="IPR001412">
    <property type="entry name" value="aa-tRNA-synth_I_CS"/>
</dbReference>
<dbReference type="InterPro" id="IPR041872">
    <property type="entry name" value="Anticodon_Met"/>
</dbReference>
<dbReference type="InterPro" id="IPR004495">
    <property type="entry name" value="Met-tRNA-synth_bsu_C"/>
</dbReference>
<dbReference type="InterPro" id="IPR023458">
    <property type="entry name" value="Met-tRNA_ligase_1"/>
</dbReference>
<dbReference type="InterPro" id="IPR014758">
    <property type="entry name" value="Met-tRNA_synth"/>
</dbReference>
<dbReference type="InterPro" id="IPR015413">
    <property type="entry name" value="Methionyl/Leucyl_tRNA_Synth"/>
</dbReference>
<dbReference type="InterPro" id="IPR033911">
    <property type="entry name" value="MetRS_core"/>
</dbReference>
<dbReference type="InterPro" id="IPR029038">
    <property type="entry name" value="MetRS_Zn"/>
</dbReference>
<dbReference type="InterPro" id="IPR012340">
    <property type="entry name" value="NA-bd_OB-fold"/>
</dbReference>
<dbReference type="InterPro" id="IPR014729">
    <property type="entry name" value="Rossmann-like_a/b/a_fold"/>
</dbReference>
<dbReference type="InterPro" id="IPR002547">
    <property type="entry name" value="tRNA-bd_dom"/>
</dbReference>
<dbReference type="InterPro" id="IPR009080">
    <property type="entry name" value="tRNAsynth_Ia_anticodon-bd"/>
</dbReference>
<dbReference type="NCBIfam" id="TIGR00398">
    <property type="entry name" value="metG"/>
    <property type="match status" value="1"/>
</dbReference>
<dbReference type="NCBIfam" id="TIGR00399">
    <property type="entry name" value="metG_C_term"/>
    <property type="match status" value="1"/>
</dbReference>
<dbReference type="NCBIfam" id="NF001100">
    <property type="entry name" value="PRK00133.1"/>
    <property type="match status" value="1"/>
</dbReference>
<dbReference type="PANTHER" id="PTHR45765">
    <property type="entry name" value="METHIONINE--TRNA LIGASE"/>
    <property type="match status" value="1"/>
</dbReference>
<dbReference type="PANTHER" id="PTHR45765:SF1">
    <property type="entry name" value="METHIONINE--TRNA LIGASE, CYTOPLASMIC"/>
    <property type="match status" value="1"/>
</dbReference>
<dbReference type="Pfam" id="PF19303">
    <property type="entry name" value="Anticodon_3"/>
    <property type="match status" value="1"/>
</dbReference>
<dbReference type="Pfam" id="PF09334">
    <property type="entry name" value="tRNA-synt_1g"/>
    <property type="match status" value="1"/>
</dbReference>
<dbReference type="Pfam" id="PF01588">
    <property type="entry name" value="tRNA_bind"/>
    <property type="match status" value="1"/>
</dbReference>
<dbReference type="PRINTS" id="PR01041">
    <property type="entry name" value="TRNASYNTHMET"/>
</dbReference>
<dbReference type="SUPFAM" id="SSF47323">
    <property type="entry name" value="Anticodon-binding domain of a subclass of class I aminoacyl-tRNA synthetases"/>
    <property type="match status" value="1"/>
</dbReference>
<dbReference type="SUPFAM" id="SSF57770">
    <property type="entry name" value="Methionyl-tRNA synthetase (MetRS), Zn-domain"/>
    <property type="match status" value="1"/>
</dbReference>
<dbReference type="SUPFAM" id="SSF50249">
    <property type="entry name" value="Nucleic acid-binding proteins"/>
    <property type="match status" value="1"/>
</dbReference>
<dbReference type="SUPFAM" id="SSF52374">
    <property type="entry name" value="Nucleotidylyl transferase"/>
    <property type="match status" value="1"/>
</dbReference>
<dbReference type="PROSITE" id="PS00178">
    <property type="entry name" value="AA_TRNA_LIGASE_I"/>
    <property type="match status" value="1"/>
</dbReference>
<dbReference type="PROSITE" id="PS50886">
    <property type="entry name" value="TRBD"/>
    <property type="match status" value="1"/>
</dbReference>
<keyword id="KW-0030">Aminoacyl-tRNA synthetase</keyword>
<keyword id="KW-0067">ATP-binding</keyword>
<keyword id="KW-0963">Cytoplasm</keyword>
<keyword id="KW-0436">Ligase</keyword>
<keyword id="KW-0479">Metal-binding</keyword>
<keyword id="KW-0547">Nucleotide-binding</keyword>
<keyword id="KW-0648">Protein biosynthesis</keyword>
<keyword id="KW-1185">Reference proteome</keyword>
<keyword id="KW-0694">RNA-binding</keyword>
<keyword id="KW-0820">tRNA-binding</keyword>
<keyword id="KW-0862">Zinc</keyword>
<accession>Q0AAG6</accession>
<name>SYM_ALKEH</name>
<evidence type="ECO:0000255" key="1">
    <source>
        <dbReference type="HAMAP-Rule" id="MF_00098"/>
    </source>
</evidence>
<sequence length="675" mass="76942">MTRKILVTSALPYANGPIHLGHLVEYIQTDIWARFQRLRGHDCHYVCADDAHGTPIMLKARERGITPEALIAEVGEEHQRDFADFLIEFDNYHTTHSDENRYFAELIYSRLNQAGHIDRKVIKQAYDPKLEMFLPDRYIKGECPRCGAEDQYGDSCEACGATYTPAELKNAVSVVSGERPVERESEHYFFRLQDFEAMLREWASPEHLQAEVANKLAEWFKEGLRSWDISRDAPYFGFRIPDTEDKYFYVWLDAPIGYMASFKHLCERKGLDFDDWWGPDSTAELYHFIGKDIIYFHALFWPAMLHGAGFRKPTEICAHGFLTVNGQKMSKSRGTFIMARTWLDHLNPEYLRYYFAAKLSASVHDLDLSLDDFTQRVNADLVGKLVNIASRCAGFIHKRFEGRLGETLDDPALYRQFTAAGEHIAELYEKREFSRAMREIMALADQANQYVDEQKPWVLAKQEDQADRVQDICTQGLNLFRVLVVYLKPVLPRLAADAEAFLNLPEQCWADAKTPLLDHGIRKFKPLMTRVDPDRVQAMLEDSKKTLQPKGEPQAAEAGPLTSDPIAEQIEIGDFAKVDLRIARIEQAEHVEGADKLLRLQLDLGGETRQVFAGIKQAYRPEDLEGRLTVMAANLKPRKMKFGVSEGMVLAAGPGGSDLYLLEPHQGAQPGMRVK</sequence>
<organism>
    <name type="scientific">Alkalilimnicola ehrlichii (strain ATCC BAA-1101 / DSM 17681 / MLHE-1)</name>
    <dbReference type="NCBI Taxonomy" id="187272"/>
    <lineage>
        <taxon>Bacteria</taxon>
        <taxon>Pseudomonadati</taxon>
        <taxon>Pseudomonadota</taxon>
        <taxon>Gammaproteobacteria</taxon>
        <taxon>Chromatiales</taxon>
        <taxon>Ectothiorhodospiraceae</taxon>
        <taxon>Alkalilimnicola</taxon>
    </lineage>
</organism>
<gene>
    <name evidence="1" type="primary">metG</name>
    <name type="ordered locus">Mlg_0817</name>
</gene>
<feature type="chain" id="PRO_0000331777" description="Methionine--tRNA ligase">
    <location>
        <begin position="1"/>
        <end position="675"/>
    </location>
</feature>
<feature type="domain" description="tRNA-binding" evidence="1">
    <location>
        <begin position="574"/>
        <end position="675"/>
    </location>
</feature>
<feature type="short sequence motif" description="'HIGH' region">
    <location>
        <begin position="12"/>
        <end position="22"/>
    </location>
</feature>
<feature type="short sequence motif" description="'KMSKS' region">
    <location>
        <begin position="328"/>
        <end position="332"/>
    </location>
</feature>
<feature type="binding site" evidence="1">
    <location>
        <position position="143"/>
    </location>
    <ligand>
        <name>Zn(2+)</name>
        <dbReference type="ChEBI" id="CHEBI:29105"/>
    </ligand>
</feature>
<feature type="binding site" evidence="1">
    <location>
        <position position="146"/>
    </location>
    <ligand>
        <name>Zn(2+)</name>
        <dbReference type="ChEBI" id="CHEBI:29105"/>
    </ligand>
</feature>
<feature type="binding site" evidence="1">
    <location>
        <position position="156"/>
    </location>
    <ligand>
        <name>Zn(2+)</name>
        <dbReference type="ChEBI" id="CHEBI:29105"/>
    </ligand>
</feature>
<feature type="binding site" evidence="1">
    <location>
        <position position="159"/>
    </location>
    <ligand>
        <name>Zn(2+)</name>
        <dbReference type="ChEBI" id="CHEBI:29105"/>
    </ligand>
</feature>
<feature type="binding site" evidence="1">
    <location>
        <position position="331"/>
    </location>
    <ligand>
        <name>ATP</name>
        <dbReference type="ChEBI" id="CHEBI:30616"/>
    </ligand>
</feature>
<protein>
    <recommendedName>
        <fullName evidence="1">Methionine--tRNA ligase</fullName>
        <ecNumber evidence="1">6.1.1.10</ecNumber>
    </recommendedName>
    <alternativeName>
        <fullName evidence="1">Methionyl-tRNA synthetase</fullName>
        <shortName evidence="1">MetRS</shortName>
    </alternativeName>
</protein>
<reference key="1">
    <citation type="submission" date="2006-08" db="EMBL/GenBank/DDBJ databases">
        <title>Complete sequence of Alkalilimnicola ehrilichei MLHE-1.</title>
        <authorList>
            <person name="Copeland A."/>
            <person name="Lucas S."/>
            <person name="Lapidus A."/>
            <person name="Barry K."/>
            <person name="Detter J.C."/>
            <person name="Glavina del Rio T."/>
            <person name="Hammon N."/>
            <person name="Israni S."/>
            <person name="Dalin E."/>
            <person name="Tice H."/>
            <person name="Pitluck S."/>
            <person name="Sims D."/>
            <person name="Brettin T."/>
            <person name="Bruce D."/>
            <person name="Han C."/>
            <person name="Tapia R."/>
            <person name="Gilna P."/>
            <person name="Schmutz J."/>
            <person name="Larimer F."/>
            <person name="Land M."/>
            <person name="Hauser L."/>
            <person name="Kyrpides N."/>
            <person name="Mikhailova N."/>
            <person name="Oremland R.S."/>
            <person name="Hoeft S.E."/>
            <person name="Switzer-Blum J."/>
            <person name="Kulp T."/>
            <person name="King G."/>
            <person name="Tabita R."/>
            <person name="Witte B."/>
            <person name="Santini J.M."/>
            <person name="Basu P."/>
            <person name="Hollibaugh J.T."/>
            <person name="Xie G."/>
            <person name="Stolz J.F."/>
            <person name="Richardson P."/>
        </authorList>
    </citation>
    <scope>NUCLEOTIDE SEQUENCE [LARGE SCALE GENOMIC DNA]</scope>
    <source>
        <strain>ATCC BAA-1101 / DSM 17681 / MLHE-1</strain>
    </source>
</reference>
<comment type="function">
    <text evidence="1">Is required not only for elongation of protein synthesis but also for the initiation of all mRNA translation through initiator tRNA(fMet) aminoacylation.</text>
</comment>
<comment type="catalytic activity">
    <reaction evidence="1">
        <text>tRNA(Met) + L-methionine + ATP = L-methionyl-tRNA(Met) + AMP + diphosphate</text>
        <dbReference type="Rhea" id="RHEA:13481"/>
        <dbReference type="Rhea" id="RHEA-COMP:9667"/>
        <dbReference type="Rhea" id="RHEA-COMP:9698"/>
        <dbReference type="ChEBI" id="CHEBI:30616"/>
        <dbReference type="ChEBI" id="CHEBI:33019"/>
        <dbReference type="ChEBI" id="CHEBI:57844"/>
        <dbReference type="ChEBI" id="CHEBI:78442"/>
        <dbReference type="ChEBI" id="CHEBI:78530"/>
        <dbReference type="ChEBI" id="CHEBI:456215"/>
        <dbReference type="EC" id="6.1.1.10"/>
    </reaction>
</comment>
<comment type="cofactor">
    <cofactor evidence="1">
        <name>Zn(2+)</name>
        <dbReference type="ChEBI" id="CHEBI:29105"/>
    </cofactor>
    <text evidence="1">Binds 1 zinc ion per subunit.</text>
</comment>
<comment type="subunit">
    <text evidence="1">Homodimer.</text>
</comment>
<comment type="subcellular location">
    <subcellularLocation>
        <location evidence="1">Cytoplasm</location>
    </subcellularLocation>
</comment>
<comment type="similarity">
    <text evidence="1">Belongs to the class-I aminoacyl-tRNA synthetase family. MetG type 1 subfamily.</text>
</comment>
<proteinExistence type="inferred from homology"/>